<feature type="chain" id="PRO_0000364169" description="Eukaryotic translation initiation factor 3 subunit D">
    <location>
        <begin position="1"/>
        <end position="585"/>
    </location>
</feature>
<feature type="region of interest" description="Disordered" evidence="3">
    <location>
        <begin position="110"/>
        <end position="152"/>
    </location>
</feature>
<feature type="region of interest" description="RNA gate" evidence="1">
    <location>
        <begin position="300"/>
        <end position="314"/>
    </location>
</feature>
<feature type="region of interest" description="Disordered" evidence="3">
    <location>
        <begin position="560"/>
        <end position="585"/>
    </location>
</feature>
<feature type="compositionally biased region" description="Gly residues" evidence="3">
    <location>
        <begin position="110"/>
        <end position="130"/>
    </location>
</feature>
<feature type="compositionally biased region" description="Acidic residues" evidence="3">
    <location>
        <begin position="565"/>
        <end position="585"/>
    </location>
</feature>
<dbReference type="EMBL" id="AAHF01000001">
    <property type="protein sequence ID" value="EAL93761.1"/>
    <property type="molecule type" value="Genomic_DNA"/>
</dbReference>
<dbReference type="RefSeq" id="XP_755799.1">
    <property type="nucleotide sequence ID" value="XM_750706.1"/>
</dbReference>
<dbReference type="SMR" id="Q4X054"/>
<dbReference type="STRING" id="330879.Q4X054"/>
<dbReference type="EnsemblFungi" id="EAL93761">
    <property type="protein sequence ID" value="EAL93761"/>
    <property type="gene ID" value="AFUA_2G14670"/>
</dbReference>
<dbReference type="GeneID" id="3513495"/>
<dbReference type="KEGG" id="afm:AFUA_2G14670"/>
<dbReference type="VEuPathDB" id="FungiDB:Afu2g14670"/>
<dbReference type="eggNOG" id="KOG2479">
    <property type="taxonomic scope" value="Eukaryota"/>
</dbReference>
<dbReference type="HOGENOM" id="CLU_024521_2_0_1"/>
<dbReference type="InParanoid" id="Q4X054"/>
<dbReference type="OMA" id="FMDKRDN"/>
<dbReference type="OrthoDB" id="16538at2759"/>
<dbReference type="Proteomes" id="UP000002530">
    <property type="component" value="Chromosome 2"/>
</dbReference>
<dbReference type="GO" id="GO:0005829">
    <property type="term" value="C:cytosol"/>
    <property type="evidence" value="ECO:0007669"/>
    <property type="project" value="EnsemblFungi"/>
</dbReference>
<dbReference type="GO" id="GO:0016282">
    <property type="term" value="C:eukaryotic 43S preinitiation complex"/>
    <property type="evidence" value="ECO:0007669"/>
    <property type="project" value="UniProtKB-UniRule"/>
</dbReference>
<dbReference type="GO" id="GO:0033290">
    <property type="term" value="C:eukaryotic 48S preinitiation complex"/>
    <property type="evidence" value="ECO:0007669"/>
    <property type="project" value="UniProtKB-UniRule"/>
</dbReference>
<dbReference type="GO" id="GO:0005852">
    <property type="term" value="C:eukaryotic translation initiation factor 3 complex"/>
    <property type="evidence" value="ECO:0000318"/>
    <property type="project" value="GO_Central"/>
</dbReference>
<dbReference type="GO" id="GO:0071540">
    <property type="term" value="C:eukaryotic translation initiation factor 3 complex, eIF3e"/>
    <property type="evidence" value="ECO:0007669"/>
    <property type="project" value="EnsemblFungi"/>
</dbReference>
<dbReference type="GO" id="GO:0071541">
    <property type="term" value="C:eukaryotic translation initiation factor 3 complex, eIF3m"/>
    <property type="evidence" value="ECO:0007669"/>
    <property type="project" value="EnsemblFungi"/>
</dbReference>
<dbReference type="GO" id="GO:0098808">
    <property type="term" value="F:mRNA cap binding"/>
    <property type="evidence" value="ECO:0007669"/>
    <property type="project" value="UniProtKB-UniRule"/>
</dbReference>
<dbReference type="GO" id="GO:0003743">
    <property type="term" value="F:translation initiation factor activity"/>
    <property type="evidence" value="ECO:0000318"/>
    <property type="project" value="GO_Central"/>
</dbReference>
<dbReference type="GO" id="GO:0002191">
    <property type="term" value="P:cap-dependent translational initiation"/>
    <property type="evidence" value="ECO:0007669"/>
    <property type="project" value="UniProtKB-UniRule"/>
</dbReference>
<dbReference type="GO" id="GO:0001732">
    <property type="term" value="P:formation of cytoplasmic translation initiation complex"/>
    <property type="evidence" value="ECO:0007669"/>
    <property type="project" value="UniProtKB-UniRule"/>
</dbReference>
<dbReference type="GO" id="GO:0006413">
    <property type="term" value="P:translational initiation"/>
    <property type="evidence" value="ECO:0000318"/>
    <property type="project" value="GO_Central"/>
</dbReference>
<dbReference type="HAMAP" id="MF_03003">
    <property type="entry name" value="eIF3d"/>
    <property type="match status" value="1"/>
</dbReference>
<dbReference type="InterPro" id="IPR007783">
    <property type="entry name" value="eIF3d"/>
</dbReference>
<dbReference type="PANTHER" id="PTHR12399">
    <property type="entry name" value="EUKARYOTIC TRANSLATION INITIATION FACTOR 3 SUBUNIT 7"/>
    <property type="match status" value="1"/>
</dbReference>
<dbReference type="PANTHER" id="PTHR12399:SF0">
    <property type="entry name" value="EUKARYOTIC TRANSLATION INITIATION FACTOR 3 SUBUNIT D"/>
    <property type="match status" value="1"/>
</dbReference>
<dbReference type="Pfam" id="PF05091">
    <property type="entry name" value="eIF-3_zeta"/>
    <property type="match status" value="1"/>
</dbReference>
<dbReference type="PIRSF" id="PIRSF016281">
    <property type="entry name" value="EIF-3_zeta"/>
    <property type="match status" value="1"/>
</dbReference>
<evidence type="ECO:0000250" key="1">
    <source>
        <dbReference type="UniProtKB" id="K7IM66"/>
    </source>
</evidence>
<evidence type="ECO:0000255" key="2">
    <source>
        <dbReference type="HAMAP-Rule" id="MF_03003"/>
    </source>
</evidence>
<evidence type="ECO:0000256" key="3">
    <source>
        <dbReference type="SAM" id="MobiDB-lite"/>
    </source>
</evidence>
<proteinExistence type="inferred from homology"/>
<sequence length="585" mass="65231">MAPMSIADLVAALPAEDTWGPATPSDNMLDGVPYAPFSKGDKLGRMADWTGDGKDRDRSGRQAYNRNYRDQQVYGAGTSSLFNIQVAEDESSFSVVDNTRTSTKRTFARGGGTVFRGRGQRGVGQRGGRAGFQRVGAGRGQGGDRYYDNRSARSNRGRRFGWKDYDKPQRTREPSVNVRPDWTMLEEVDFNRLSKLNLEAPEGEDLDSYGFLYYYDRSYDKAPVKNAERKLQALERAAYNVTTSQDPVIQELAEKNEATVFATSDILSMLMCAPRSVYSWDIVIVHQGDKIYFDKREGASIDLVTVNENAADAPVETADSSGKQESINTPSALALEATFINHNFALQTVVESEESKVTFNHPNPFYNAAEETEPLASKGYKYRRFDLSLQDDEEPLNMIVRTEVDAVMKNPVGGEDQHLIVKALNEFDSKAPGSGGALDWRSKLWSQRGAVVATEMKNNSIKLARWTTQAILAKADAMKLGFVSRANPRSATSHVILGVVGYKPREFAAQMNLNLGNGWGIVRTIVDRIRALDAEEEEDKVKKYVLIKDPNRPVIRLYSVPPNTFEEDDEAAEEQEEKAEDESEE</sequence>
<accession>Q4X054</accession>
<reference key="1">
    <citation type="journal article" date="2005" name="Nature">
        <title>Genomic sequence of the pathogenic and allergenic filamentous fungus Aspergillus fumigatus.</title>
        <authorList>
            <person name="Nierman W.C."/>
            <person name="Pain A."/>
            <person name="Anderson M.J."/>
            <person name="Wortman J.R."/>
            <person name="Kim H.S."/>
            <person name="Arroyo J."/>
            <person name="Berriman M."/>
            <person name="Abe K."/>
            <person name="Archer D.B."/>
            <person name="Bermejo C."/>
            <person name="Bennett J.W."/>
            <person name="Bowyer P."/>
            <person name="Chen D."/>
            <person name="Collins M."/>
            <person name="Coulsen R."/>
            <person name="Davies R."/>
            <person name="Dyer P.S."/>
            <person name="Farman M.L."/>
            <person name="Fedorova N."/>
            <person name="Fedorova N.D."/>
            <person name="Feldblyum T.V."/>
            <person name="Fischer R."/>
            <person name="Fosker N."/>
            <person name="Fraser A."/>
            <person name="Garcia J.L."/>
            <person name="Garcia M.J."/>
            <person name="Goble A."/>
            <person name="Goldman G.H."/>
            <person name="Gomi K."/>
            <person name="Griffith-Jones S."/>
            <person name="Gwilliam R."/>
            <person name="Haas B.J."/>
            <person name="Haas H."/>
            <person name="Harris D.E."/>
            <person name="Horiuchi H."/>
            <person name="Huang J."/>
            <person name="Humphray S."/>
            <person name="Jimenez J."/>
            <person name="Keller N."/>
            <person name="Khouri H."/>
            <person name="Kitamoto K."/>
            <person name="Kobayashi T."/>
            <person name="Konzack S."/>
            <person name="Kulkarni R."/>
            <person name="Kumagai T."/>
            <person name="Lafton A."/>
            <person name="Latge J.-P."/>
            <person name="Li W."/>
            <person name="Lord A."/>
            <person name="Lu C."/>
            <person name="Majoros W.H."/>
            <person name="May G.S."/>
            <person name="Miller B.L."/>
            <person name="Mohamoud Y."/>
            <person name="Molina M."/>
            <person name="Monod M."/>
            <person name="Mouyna I."/>
            <person name="Mulligan S."/>
            <person name="Murphy L.D."/>
            <person name="O'Neil S."/>
            <person name="Paulsen I."/>
            <person name="Penalva M.A."/>
            <person name="Pertea M."/>
            <person name="Price C."/>
            <person name="Pritchard B.L."/>
            <person name="Quail M.A."/>
            <person name="Rabbinowitsch E."/>
            <person name="Rawlins N."/>
            <person name="Rajandream M.A."/>
            <person name="Reichard U."/>
            <person name="Renauld H."/>
            <person name="Robson G.D."/>
            <person name="Rodriguez de Cordoba S."/>
            <person name="Rodriguez-Pena J.M."/>
            <person name="Ronning C.M."/>
            <person name="Rutter S."/>
            <person name="Salzberg S.L."/>
            <person name="Sanchez M."/>
            <person name="Sanchez-Ferrero J.C."/>
            <person name="Saunders D."/>
            <person name="Seeger K."/>
            <person name="Squares R."/>
            <person name="Squares S."/>
            <person name="Takeuchi M."/>
            <person name="Tekaia F."/>
            <person name="Turner G."/>
            <person name="Vazquez de Aldana C.R."/>
            <person name="Weidman J."/>
            <person name="White O."/>
            <person name="Woodward J.R."/>
            <person name="Yu J.-H."/>
            <person name="Fraser C.M."/>
            <person name="Galagan J.E."/>
            <person name="Asai K."/>
            <person name="Machida M."/>
            <person name="Hall N."/>
            <person name="Barrell B.G."/>
            <person name="Denning D.W."/>
        </authorList>
    </citation>
    <scope>NUCLEOTIDE SEQUENCE [LARGE SCALE GENOMIC DNA]</scope>
    <source>
        <strain>ATCC MYA-4609 / CBS 101355 / FGSC A1100 / Af293</strain>
    </source>
</reference>
<name>EIF3D_ASPFU</name>
<comment type="function">
    <text evidence="2">mRNA cap-binding component of the eukaryotic translation initiation factor 3 (eIF-3) complex, which is involved in protein synthesis of a specialized repertoire of mRNAs and, together with other initiation factors, stimulates binding of mRNA and methionyl-tRNAi to the 40S ribosome. The eIF-3 complex specifically targets and initiates translation of a subset of mRNAs involved in cell proliferation. In the eIF-3 complex, eif3d specifically recognizes and binds the 7-methylguanosine cap of a subset of mRNAs.</text>
</comment>
<comment type="subunit">
    <text evidence="2">Component of the eukaryotic translation initiation factor 3 (eIF-3) complex.</text>
</comment>
<comment type="subcellular location">
    <subcellularLocation>
        <location evidence="2">Cytoplasm</location>
    </subcellularLocation>
</comment>
<comment type="domain">
    <text evidence="2">The RNA gate region regulates mRNA cap recognition to prevent promiscuous mRNA-binding before assembly of eif3d into the full eukaryotic translation initiation factor 3 (eIF-3) complex.</text>
</comment>
<comment type="similarity">
    <text evidence="2">Belongs to the eIF-3 subunit D family.</text>
</comment>
<organism>
    <name type="scientific">Aspergillus fumigatus (strain ATCC MYA-4609 / CBS 101355 / FGSC A1100 / Af293)</name>
    <name type="common">Neosartorya fumigata</name>
    <dbReference type="NCBI Taxonomy" id="330879"/>
    <lineage>
        <taxon>Eukaryota</taxon>
        <taxon>Fungi</taxon>
        <taxon>Dikarya</taxon>
        <taxon>Ascomycota</taxon>
        <taxon>Pezizomycotina</taxon>
        <taxon>Eurotiomycetes</taxon>
        <taxon>Eurotiomycetidae</taxon>
        <taxon>Eurotiales</taxon>
        <taxon>Aspergillaceae</taxon>
        <taxon>Aspergillus</taxon>
        <taxon>Aspergillus subgen. Fumigati</taxon>
    </lineage>
</organism>
<gene>
    <name type="ORF">AFUA_2G14670</name>
</gene>
<keyword id="KW-0963">Cytoplasm</keyword>
<keyword id="KW-0396">Initiation factor</keyword>
<keyword id="KW-0648">Protein biosynthesis</keyword>
<keyword id="KW-1185">Reference proteome</keyword>
<keyword id="KW-0694">RNA-binding</keyword>
<protein>
    <recommendedName>
        <fullName evidence="2">Eukaryotic translation initiation factor 3 subunit D</fullName>
        <shortName evidence="2">eIF3d</shortName>
    </recommendedName>
</protein>